<gene>
    <name type="primary">ORF42</name>
</gene>
<proteinExistence type="inferred from homology"/>
<reference key="1">
    <citation type="journal article" date="1999" name="J. Virol.">
        <title>Identification of a spliced gene from Kaposi's sarcoma-associated herpesvirus encoding a protein with similarities to latent membrane proteins 1 and 2A of Epstein-Barr virus.</title>
        <authorList>
            <person name="Glenn M."/>
            <person name="Rainbow L."/>
            <person name="Aurade F."/>
            <person name="Davison A."/>
            <person name="Schulz T.F."/>
        </authorList>
    </citation>
    <scope>NUCLEOTIDE SEQUENCE [LARGE SCALE GENOMIC DNA]</scope>
</reference>
<reference key="2">
    <citation type="journal article" date="2006" name="J. Gen. Virol.">
        <title>Kaposi's sarcoma-associated herpesvirus immune modulation: an overview.</title>
        <authorList>
            <person name="Rezaee S.A.R."/>
            <person name="Cunningham C."/>
            <person name="Davison A.J."/>
            <person name="Blackbourn D.J."/>
        </authorList>
    </citation>
    <scope>NUCLEOTIDE SEQUENCE [LARGE SCALE GENOMIC DNA]</scope>
</reference>
<feature type="chain" id="PRO_0000423800" description="Cytoplasmic envelopment protein 1">
    <location>
        <begin position="1"/>
        <end position="278"/>
    </location>
</feature>
<organismHost>
    <name type="scientific">Homo sapiens</name>
    <name type="common">Human</name>
    <dbReference type="NCBI Taxonomy" id="9606"/>
</organismHost>
<name>CEP1_HHV8P</name>
<evidence type="ECO:0000255" key="1">
    <source>
        <dbReference type="HAMAP-Rule" id="MF_04038"/>
    </source>
</evidence>
<sequence length="278" mass="31225">MSLERALARLTGVPMSTHAPKTRESEEACPVYPHPVVPRLVLEVHRKNNALVGSNTPKMSVMGHLDIACLREHVKSRLSSPNFVGFTVVCLVEHEDMVTHIDLHPHVFQERVCLLRPTSPGITELCCLLSMLENCRDMSPTFLRSIICRARKTHERTPGMDAAFVMHGIETLTATAAFVYELSVDDHFRATPLVMFKLHKAIGDASTPMGGLMKPIYLESFKLESSGENEDDKQTCADPVNIFYCDTIFTKHLENNEVLKYLKMCTLFKPPIVSLFSK</sequence>
<keyword id="KW-1035">Host cytoplasm</keyword>
<keyword id="KW-1040">Host Golgi apparatus</keyword>
<keyword id="KW-1185">Reference proteome</keyword>
<keyword id="KW-0946">Virion</keyword>
<keyword id="KW-0920">Virion tegument</keyword>
<protein>
    <recommendedName>
        <fullName evidence="1">Cytoplasmic envelopment protein 1</fullName>
    </recommendedName>
</protein>
<organism>
    <name type="scientific">Human herpesvirus 8 type P (isolate GK18)</name>
    <name type="common">HHV-8</name>
    <name type="synonym">Kaposi's sarcoma-associated herpesvirus</name>
    <dbReference type="NCBI Taxonomy" id="868565"/>
    <lineage>
        <taxon>Viruses</taxon>
        <taxon>Duplodnaviria</taxon>
        <taxon>Heunggongvirae</taxon>
        <taxon>Peploviricota</taxon>
        <taxon>Herviviricetes</taxon>
        <taxon>Herpesvirales</taxon>
        <taxon>Orthoherpesviridae</taxon>
        <taxon>Gammaherpesvirinae</taxon>
        <taxon>Rhadinovirus</taxon>
        <taxon>Rhadinovirus humangamma8</taxon>
        <taxon>Human herpesvirus 8</taxon>
    </lineage>
</organism>
<comment type="function">
    <text evidence="1">Plays a critical role in cytoplasmic virus egress. Participates in the final step of tegumentation and envelope acquisition within the host cytoplasm.</text>
</comment>
<comment type="subcellular location">
    <subcellularLocation>
        <location evidence="1">Virion</location>
    </subcellularLocation>
    <subcellularLocation>
        <location evidence="1">Virion tegument</location>
    </subcellularLocation>
    <subcellularLocation>
        <location evidence="1">Host cytoplasm</location>
    </subcellularLocation>
    <subcellularLocation>
        <location evidence="1">Host Golgi apparatus</location>
    </subcellularLocation>
</comment>
<comment type="similarity">
    <text evidence="1">Belongs to the herpesviridae cytoplasmic envelopment protein 1 family.</text>
</comment>
<dbReference type="EMBL" id="AF148805">
    <property type="protein sequence ID" value="ABD28892.1"/>
    <property type="molecule type" value="Genomic_DNA"/>
</dbReference>
<dbReference type="RefSeq" id="YP_001129394.1">
    <property type="nucleotide sequence ID" value="NC_009333.1"/>
</dbReference>
<dbReference type="SMR" id="F5HAI6"/>
<dbReference type="BioGRID" id="1776943">
    <property type="interactions" value="1"/>
</dbReference>
<dbReference type="DNASU" id="4961440"/>
<dbReference type="GeneID" id="4961440"/>
<dbReference type="KEGG" id="vg:4961440"/>
<dbReference type="Proteomes" id="UP000000942">
    <property type="component" value="Segment"/>
</dbReference>
<dbReference type="GO" id="GO:0044177">
    <property type="term" value="C:host cell Golgi apparatus"/>
    <property type="evidence" value="ECO:0007669"/>
    <property type="project" value="UniProtKB-SubCell"/>
</dbReference>
<dbReference type="GO" id="GO:0019033">
    <property type="term" value="C:viral tegument"/>
    <property type="evidence" value="ECO:0007669"/>
    <property type="project" value="UniProtKB-SubCell"/>
</dbReference>
<dbReference type="HAMAP" id="MF_04038">
    <property type="entry name" value="HSV_CEP1"/>
    <property type="match status" value="1"/>
</dbReference>
<dbReference type="InterPro" id="IPR002600">
    <property type="entry name" value="Herpes_UL7"/>
</dbReference>
<dbReference type="Pfam" id="PF01677">
    <property type="entry name" value="Herpes_UL7"/>
    <property type="match status" value="1"/>
</dbReference>
<accession>F5HAI6</accession>